<comment type="function">
    <text evidence="1">Binds to the 60S ribosomal subunit and prevents its association with the 40S ribosomal subunit to form the 80S initiation complex in the cytoplasm. May also be involved in ribosome biogenesis.</text>
</comment>
<comment type="subunit">
    <text evidence="1">Monomer. Associates with the 60S ribosomal subunit.</text>
</comment>
<comment type="subcellular location">
    <subcellularLocation>
        <location evidence="1">Cytoplasm</location>
    </subcellularLocation>
    <subcellularLocation>
        <location evidence="1">Nucleus</location>
        <location evidence="1">Nucleolus</location>
    </subcellularLocation>
    <text evidence="1">Shuttles between cytoplasm and nucleus/nucleolus.</text>
</comment>
<comment type="similarity">
    <text evidence="1">Belongs to the eIF-6 family.</text>
</comment>
<comment type="sequence caution" evidence="2">
    <conflict type="erroneous gene model prediction">
        <sequence resource="EMBL-CDS" id="ABO94498"/>
    </conflict>
</comment>
<accession>A4RSQ6</accession>
<feature type="chain" id="PRO_0000402100" description="Eukaryotic translation initiation factor 6">
    <location>
        <begin position="1"/>
        <end position="245"/>
    </location>
</feature>
<organism>
    <name type="scientific">Ostreococcus lucimarinus (strain CCE9901)</name>
    <dbReference type="NCBI Taxonomy" id="436017"/>
    <lineage>
        <taxon>Eukaryota</taxon>
        <taxon>Viridiplantae</taxon>
        <taxon>Chlorophyta</taxon>
        <taxon>Mamiellophyceae</taxon>
        <taxon>Mamiellales</taxon>
        <taxon>Bathycoccaceae</taxon>
        <taxon>Ostreococcus</taxon>
    </lineage>
</organism>
<protein>
    <recommendedName>
        <fullName evidence="1">Eukaryotic translation initiation factor 6</fullName>
        <shortName evidence="1">eIF-6</shortName>
    </recommendedName>
</protein>
<name>IF6_OSTLU</name>
<dbReference type="EMBL" id="CP000582">
    <property type="protein sequence ID" value="ABO94498.1"/>
    <property type="status" value="ALT_SEQ"/>
    <property type="molecule type" value="Genomic_DNA"/>
</dbReference>
<dbReference type="RefSeq" id="XP_001416205.1">
    <property type="nucleotide sequence ID" value="XM_001416168.1"/>
</dbReference>
<dbReference type="SMR" id="A4RSQ6"/>
<dbReference type="STRING" id="436017.A4RSQ6"/>
<dbReference type="GeneID" id="5000461"/>
<dbReference type="KEGG" id="olu:OSTLU_119613"/>
<dbReference type="eggNOG" id="KOG3185">
    <property type="taxonomic scope" value="Eukaryota"/>
</dbReference>
<dbReference type="HOGENOM" id="CLU_071894_0_0_1"/>
<dbReference type="OrthoDB" id="4155914at2759"/>
<dbReference type="Proteomes" id="UP000001568">
    <property type="component" value="Chromosome 2"/>
</dbReference>
<dbReference type="GO" id="GO:0005737">
    <property type="term" value="C:cytoplasm"/>
    <property type="evidence" value="ECO:0007669"/>
    <property type="project" value="UniProtKB-SubCell"/>
</dbReference>
<dbReference type="GO" id="GO:0005730">
    <property type="term" value="C:nucleolus"/>
    <property type="evidence" value="ECO:0007669"/>
    <property type="project" value="UniProtKB-SubCell"/>
</dbReference>
<dbReference type="GO" id="GO:0043023">
    <property type="term" value="F:ribosomal large subunit binding"/>
    <property type="evidence" value="ECO:0007669"/>
    <property type="project" value="UniProtKB-UniRule"/>
</dbReference>
<dbReference type="GO" id="GO:0003743">
    <property type="term" value="F:translation initiation factor activity"/>
    <property type="evidence" value="ECO:0007669"/>
    <property type="project" value="UniProtKB-UniRule"/>
</dbReference>
<dbReference type="GO" id="GO:0042256">
    <property type="term" value="P:cytosolic ribosome assembly"/>
    <property type="evidence" value="ECO:0007669"/>
    <property type="project" value="UniProtKB-UniRule"/>
</dbReference>
<dbReference type="GO" id="GO:0042273">
    <property type="term" value="P:ribosomal large subunit biogenesis"/>
    <property type="evidence" value="ECO:0007669"/>
    <property type="project" value="UniProtKB-UniRule"/>
</dbReference>
<dbReference type="CDD" id="cd00527">
    <property type="entry name" value="IF6"/>
    <property type="match status" value="1"/>
</dbReference>
<dbReference type="FunFam" id="3.75.10.10:FF:000001">
    <property type="entry name" value="Eukaryotic translation initiation factor 6"/>
    <property type="match status" value="1"/>
</dbReference>
<dbReference type="Gene3D" id="3.75.10.10">
    <property type="entry name" value="L-arginine/glycine Amidinotransferase, Chain A"/>
    <property type="match status" value="1"/>
</dbReference>
<dbReference type="HAMAP" id="MF_00032">
    <property type="entry name" value="eIF_6"/>
    <property type="match status" value="1"/>
</dbReference>
<dbReference type="InterPro" id="IPR002769">
    <property type="entry name" value="eIF6"/>
</dbReference>
<dbReference type="NCBIfam" id="TIGR00323">
    <property type="entry name" value="eIF-6"/>
    <property type="match status" value="1"/>
</dbReference>
<dbReference type="PANTHER" id="PTHR10784">
    <property type="entry name" value="TRANSLATION INITIATION FACTOR 6"/>
    <property type="match status" value="1"/>
</dbReference>
<dbReference type="Pfam" id="PF01912">
    <property type="entry name" value="eIF-6"/>
    <property type="match status" value="1"/>
</dbReference>
<dbReference type="PIRSF" id="PIRSF006413">
    <property type="entry name" value="IF-6"/>
    <property type="match status" value="1"/>
</dbReference>
<dbReference type="SMART" id="SM00654">
    <property type="entry name" value="eIF6"/>
    <property type="match status" value="1"/>
</dbReference>
<dbReference type="SUPFAM" id="SSF55909">
    <property type="entry name" value="Pentein"/>
    <property type="match status" value="1"/>
</dbReference>
<sequence>MAARHQFENSNEIGVFAALTNAYCLAAVGGSENFYSVFEAELSNEIPVIKASLAGTRLVGRLSVGNKHGLLLPTSATDQEVMHIRNSLPDEVIVQRTEERLSALGNCVACNDHVALVHPDIDQETEEIIADVLGVEVFRQSVAGNVLVGSFCKFSNRGGMVHPQASVQEVDELSSLLQVPLVAGTINRGSDVIGAGLLVNDWIAFCGLDTTSTEIQVIESIYQLHGADSSGAVRDIRASLLDTLV</sequence>
<gene>
    <name evidence="1" type="primary">EIF6</name>
    <name type="ORF">OSTLU_119613</name>
</gene>
<keyword id="KW-0963">Cytoplasm</keyword>
<keyword id="KW-0396">Initiation factor</keyword>
<keyword id="KW-0539">Nucleus</keyword>
<keyword id="KW-0648">Protein biosynthesis</keyword>
<keyword id="KW-1185">Reference proteome</keyword>
<keyword id="KW-0690">Ribosome biogenesis</keyword>
<proteinExistence type="inferred from homology"/>
<evidence type="ECO:0000255" key="1">
    <source>
        <dbReference type="HAMAP-Rule" id="MF_03132"/>
    </source>
</evidence>
<evidence type="ECO:0000305" key="2"/>
<reference key="1">
    <citation type="journal article" date="2007" name="Proc. Natl. Acad. Sci. U.S.A.">
        <title>The tiny eukaryote Ostreococcus provides genomic insights into the paradox of plankton speciation.</title>
        <authorList>
            <person name="Palenik B."/>
            <person name="Grimwood J."/>
            <person name="Aerts A."/>
            <person name="Rouze P."/>
            <person name="Salamov A."/>
            <person name="Putnam N."/>
            <person name="Dupont C."/>
            <person name="Jorgensen R."/>
            <person name="Derelle E."/>
            <person name="Rombauts S."/>
            <person name="Zhou K."/>
            <person name="Otillar R."/>
            <person name="Merchant S.S."/>
            <person name="Podell S."/>
            <person name="Gaasterland T."/>
            <person name="Napoli C."/>
            <person name="Gendler K."/>
            <person name="Manuell A."/>
            <person name="Tai V."/>
            <person name="Vallon O."/>
            <person name="Piganeau G."/>
            <person name="Jancek S."/>
            <person name="Heijde M."/>
            <person name="Jabbari K."/>
            <person name="Bowler C."/>
            <person name="Lohr M."/>
            <person name="Robbens S."/>
            <person name="Werner G."/>
            <person name="Dubchak I."/>
            <person name="Pazour G.J."/>
            <person name="Ren Q."/>
            <person name="Paulsen I."/>
            <person name="Delwiche C."/>
            <person name="Schmutz J."/>
            <person name="Rokhsar D."/>
            <person name="Van de Peer Y."/>
            <person name="Moreau H."/>
            <person name="Grigoriev I.V."/>
        </authorList>
    </citation>
    <scope>NUCLEOTIDE SEQUENCE [LARGE SCALE GENOMIC DNA]</scope>
    <source>
        <strain>CCE9901</strain>
    </source>
</reference>